<sequence length="86" mass="7746">EGSGGSGSSGNFTTGSNIRMSSVTNTSNAGTGTGTGTGTGTATGTGTATGTGTSAGGTSAGGNASGNSGNPPPAFAITLTETLLNK</sequence>
<evidence type="ECO:0000250" key="1"/>
<evidence type="ECO:0000256" key="2">
    <source>
        <dbReference type="SAM" id="MobiDB-lite"/>
    </source>
</evidence>
<comment type="function">
    <text evidence="1">Essential for biological clock functions. Determines the period length of circadian and ultradian rhythms; an increase in PER dosage leads to shortened circadian rhythms and a decrease leads to lengthened circadian rhythms. Essential for the circadian rhythmicity of locomotor activity, eclosion behavior, and for the rhythmic component of the male courtship song that originates in the thoracic nervous system. The biological cycle depends on the rhythmic formation and nuclear localization of the TIM-PER complex. Light induces the degradation of TIM, which promotes elimination of PER. Nuclear activity of the heterodimer coordinatively regulates PER and TIM transcription through a negative feedback loop. Behaves as a negative element in circadian transcriptional loop. Does not appear to bind DNA, suggesting indirect transcriptional inhibition (By similarity).</text>
</comment>
<comment type="subunit">
    <text evidence="1">Forms a heterodimer with timeless (TIM); the complex then translocates into the nucleus.</text>
</comment>
<comment type="subcellular location">
    <subcellularLocation>
        <location evidence="1">Nucleus</location>
    </subcellularLocation>
    <subcellularLocation>
        <location evidence="1">Cytoplasm</location>
        <location evidence="1">Perinuclear region</location>
    </subcellularLocation>
    <text evidence="1">Nuclear at specific periods of the day. First accumulates in the perinuclear region about one hour before translocation into the nucleus. Interaction with Tim is required for nuclear localization (By similarity).</text>
</comment>
<comment type="domain">
    <text evidence="1">The run of Gly-Thr is implicated in the maintenance of circadian period at different temperatures. Deletion of the repeat leads to a shortening of the courtship song cycle period, and thus could be important for determining features of species-specific mating behavior (By similarity).</text>
</comment>
<comment type="PTM">
    <text evidence="1">Phosphorylated with a circadian rhythmicity, probably by the double-time protein (dbt). Phosphorylation could be implicated in the stability of per monomer and in the formation of heterodimer per-tim (By similarity).</text>
</comment>
<name>PER_DRORO</name>
<organism>
    <name type="scientific">Drosophila robusta</name>
    <name type="common">Fruit fly</name>
    <dbReference type="NCBI Taxonomy" id="7257"/>
    <lineage>
        <taxon>Eukaryota</taxon>
        <taxon>Metazoa</taxon>
        <taxon>Ecdysozoa</taxon>
        <taxon>Arthropoda</taxon>
        <taxon>Hexapoda</taxon>
        <taxon>Insecta</taxon>
        <taxon>Pterygota</taxon>
        <taxon>Neoptera</taxon>
        <taxon>Endopterygota</taxon>
        <taxon>Diptera</taxon>
        <taxon>Brachycera</taxon>
        <taxon>Muscomorpha</taxon>
        <taxon>Ephydroidea</taxon>
        <taxon>Drosophilidae</taxon>
        <taxon>Drosophila</taxon>
    </lineage>
</organism>
<keyword id="KW-0090">Biological rhythms</keyword>
<keyword id="KW-0963">Cytoplasm</keyword>
<keyword id="KW-0539">Nucleus</keyword>
<keyword id="KW-0597">Phosphoprotein</keyword>
<keyword id="KW-0677">Repeat</keyword>
<gene>
    <name type="primary">per</name>
</gene>
<feature type="chain" id="PRO_0000162605" description="Period circadian protein">
    <location>
        <begin position="1" status="less than"/>
        <end position="86" status="greater than"/>
    </location>
</feature>
<feature type="repeat" description="1">
    <location>
        <begin position="30"/>
        <end position="31"/>
    </location>
</feature>
<feature type="repeat" description="2">
    <location>
        <begin position="32"/>
        <end position="33"/>
    </location>
</feature>
<feature type="repeat" description="3">
    <location>
        <begin position="34"/>
        <end position="35"/>
    </location>
</feature>
<feature type="repeat" description="4">
    <location>
        <begin position="36"/>
        <end position="37"/>
    </location>
</feature>
<feature type="repeat" description="5">
    <location>
        <begin position="38"/>
        <end position="39"/>
    </location>
</feature>
<feature type="repeat" description="6">
    <location>
        <begin position="40"/>
        <end position="41"/>
    </location>
</feature>
<feature type="repeat" description="7; approximate">
    <location>
        <begin position="42"/>
        <end position="43"/>
    </location>
</feature>
<feature type="repeat" description="8">
    <location>
        <begin position="44"/>
        <end position="45"/>
    </location>
</feature>
<feature type="repeat" description="9">
    <location>
        <begin position="46"/>
        <end position="47"/>
    </location>
</feature>
<feature type="repeat" description="10; approximate">
    <location>
        <begin position="48"/>
        <end position="49"/>
    </location>
</feature>
<feature type="repeat" description="11">
    <location>
        <begin position="50"/>
        <end position="51"/>
    </location>
</feature>
<feature type="repeat" description="12">
    <location>
        <begin position="52"/>
        <end position="53"/>
    </location>
</feature>
<feature type="region of interest" description="Disordered" evidence="2">
    <location>
        <begin position="1"/>
        <end position="86"/>
    </location>
</feature>
<feature type="region of interest" description="12 X 2 AA approximate tandem repeats of G-T">
    <location>
        <begin position="30"/>
        <end position="53"/>
    </location>
</feature>
<feature type="compositionally biased region" description="Gly residues" evidence="2">
    <location>
        <begin position="31"/>
        <end position="64"/>
    </location>
</feature>
<feature type="non-terminal residue">
    <location>
        <position position="1"/>
    </location>
</feature>
<feature type="non-terminal residue">
    <location>
        <position position="86"/>
    </location>
</feature>
<dbReference type="EMBL" id="L06340">
    <property type="protein sequence ID" value="AAA28763.1"/>
    <property type="molecule type" value="Genomic_DNA"/>
</dbReference>
<dbReference type="GO" id="GO:0005634">
    <property type="term" value="C:nucleus"/>
    <property type="evidence" value="ECO:0007669"/>
    <property type="project" value="UniProtKB-SubCell"/>
</dbReference>
<dbReference type="GO" id="GO:0048471">
    <property type="term" value="C:perinuclear region of cytoplasm"/>
    <property type="evidence" value="ECO:0007669"/>
    <property type="project" value="UniProtKB-SubCell"/>
</dbReference>
<dbReference type="GO" id="GO:0048511">
    <property type="term" value="P:rhythmic process"/>
    <property type="evidence" value="ECO:0007669"/>
    <property type="project" value="UniProtKB-KW"/>
</dbReference>
<accession>Q03296</accession>
<protein>
    <recommendedName>
        <fullName>Period circadian protein</fullName>
    </recommendedName>
</protein>
<reference key="1">
    <citation type="journal article" date="1993" name="Mol. Biol. Evol.">
        <title>Molecular evolution of a repetitive region within the per gene of Drosophila.</title>
        <authorList>
            <person name="Peixoto A.A."/>
            <person name="Campesan S."/>
            <person name="Costa R.H."/>
            <person name="Kyriacou C.P."/>
        </authorList>
    </citation>
    <scope>NUCLEOTIDE SEQUENCE [GENOMIC DNA]</scope>
</reference>
<proteinExistence type="inferred from homology"/>